<evidence type="ECO:0000255" key="1">
    <source>
        <dbReference type="HAMAP-Rule" id="MF_00303"/>
    </source>
</evidence>
<dbReference type="EC" id="5.2.1.8" evidence="1"/>
<dbReference type="EMBL" id="CP000800">
    <property type="protein sequence ID" value="ABV17673.1"/>
    <property type="molecule type" value="Genomic_DNA"/>
</dbReference>
<dbReference type="RefSeq" id="WP_001198381.1">
    <property type="nucleotide sequence ID" value="NC_009801.1"/>
</dbReference>
<dbReference type="BMRB" id="A7ZIJ4"/>
<dbReference type="SMR" id="A7ZIJ4"/>
<dbReference type="KEGG" id="ecw:EcE24377A_0472"/>
<dbReference type="HOGENOM" id="CLU_033058_2_0_6"/>
<dbReference type="Proteomes" id="UP000001122">
    <property type="component" value="Chromosome"/>
</dbReference>
<dbReference type="GO" id="GO:0005737">
    <property type="term" value="C:cytoplasm"/>
    <property type="evidence" value="ECO:0007669"/>
    <property type="project" value="UniProtKB-SubCell"/>
</dbReference>
<dbReference type="GO" id="GO:0003755">
    <property type="term" value="F:peptidyl-prolyl cis-trans isomerase activity"/>
    <property type="evidence" value="ECO:0007669"/>
    <property type="project" value="UniProtKB-UniRule"/>
</dbReference>
<dbReference type="GO" id="GO:0044183">
    <property type="term" value="F:protein folding chaperone"/>
    <property type="evidence" value="ECO:0007669"/>
    <property type="project" value="TreeGrafter"/>
</dbReference>
<dbReference type="GO" id="GO:0043022">
    <property type="term" value="F:ribosome binding"/>
    <property type="evidence" value="ECO:0007669"/>
    <property type="project" value="TreeGrafter"/>
</dbReference>
<dbReference type="GO" id="GO:0051083">
    <property type="term" value="P:'de novo' cotranslational protein folding"/>
    <property type="evidence" value="ECO:0007669"/>
    <property type="project" value="TreeGrafter"/>
</dbReference>
<dbReference type="GO" id="GO:0051301">
    <property type="term" value="P:cell division"/>
    <property type="evidence" value="ECO:0007669"/>
    <property type="project" value="UniProtKB-KW"/>
</dbReference>
<dbReference type="GO" id="GO:0061077">
    <property type="term" value="P:chaperone-mediated protein folding"/>
    <property type="evidence" value="ECO:0007669"/>
    <property type="project" value="TreeGrafter"/>
</dbReference>
<dbReference type="GO" id="GO:0015031">
    <property type="term" value="P:protein transport"/>
    <property type="evidence" value="ECO:0007669"/>
    <property type="project" value="UniProtKB-UniRule"/>
</dbReference>
<dbReference type="GO" id="GO:0043335">
    <property type="term" value="P:protein unfolding"/>
    <property type="evidence" value="ECO:0007669"/>
    <property type="project" value="TreeGrafter"/>
</dbReference>
<dbReference type="FunFam" id="1.10.3120.10:FF:000001">
    <property type="entry name" value="Trigger factor"/>
    <property type="match status" value="1"/>
</dbReference>
<dbReference type="FunFam" id="3.10.50.40:FF:000001">
    <property type="entry name" value="Trigger factor"/>
    <property type="match status" value="1"/>
</dbReference>
<dbReference type="FunFam" id="3.30.70.1050:FF:000001">
    <property type="entry name" value="Trigger factor"/>
    <property type="match status" value="1"/>
</dbReference>
<dbReference type="Gene3D" id="3.10.50.40">
    <property type="match status" value="1"/>
</dbReference>
<dbReference type="Gene3D" id="3.30.70.1050">
    <property type="entry name" value="Trigger factor ribosome-binding domain"/>
    <property type="match status" value="1"/>
</dbReference>
<dbReference type="Gene3D" id="1.10.3120.10">
    <property type="entry name" value="Trigger factor, C-terminal domain"/>
    <property type="match status" value="1"/>
</dbReference>
<dbReference type="HAMAP" id="MF_00303">
    <property type="entry name" value="Trigger_factor_Tig"/>
    <property type="match status" value="1"/>
</dbReference>
<dbReference type="InterPro" id="IPR046357">
    <property type="entry name" value="PPIase_dom_sf"/>
</dbReference>
<dbReference type="InterPro" id="IPR001179">
    <property type="entry name" value="PPIase_FKBP_dom"/>
</dbReference>
<dbReference type="InterPro" id="IPR005215">
    <property type="entry name" value="Trig_fac"/>
</dbReference>
<dbReference type="InterPro" id="IPR008880">
    <property type="entry name" value="Trigger_fac_C"/>
</dbReference>
<dbReference type="InterPro" id="IPR037041">
    <property type="entry name" value="Trigger_fac_C_sf"/>
</dbReference>
<dbReference type="InterPro" id="IPR008881">
    <property type="entry name" value="Trigger_fac_ribosome-bd_bac"/>
</dbReference>
<dbReference type="InterPro" id="IPR036611">
    <property type="entry name" value="Trigger_fac_ribosome-bd_sf"/>
</dbReference>
<dbReference type="InterPro" id="IPR027304">
    <property type="entry name" value="Trigger_fact/SurA_dom_sf"/>
</dbReference>
<dbReference type="NCBIfam" id="TIGR00115">
    <property type="entry name" value="tig"/>
    <property type="match status" value="1"/>
</dbReference>
<dbReference type="PANTHER" id="PTHR30560">
    <property type="entry name" value="TRIGGER FACTOR CHAPERONE AND PEPTIDYL-PROLYL CIS/TRANS ISOMERASE"/>
    <property type="match status" value="1"/>
</dbReference>
<dbReference type="PANTHER" id="PTHR30560:SF3">
    <property type="entry name" value="TRIGGER FACTOR-LIKE PROTEIN TIG, CHLOROPLASTIC"/>
    <property type="match status" value="1"/>
</dbReference>
<dbReference type="Pfam" id="PF00254">
    <property type="entry name" value="FKBP_C"/>
    <property type="match status" value="1"/>
</dbReference>
<dbReference type="Pfam" id="PF05698">
    <property type="entry name" value="Trigger_C"/>
    <property type="match status" value="1"/>
</dbReference>
<dbReference type="Pfam" id="PF05697">
    <property type="entry name" value="Trigger_N"/>
    <property type="match status" value="1"/>
</dbReference>
<dbReference type="PIRSF" id="PIRSF003095">
    <property type="entry name" value="Trigger_factor"/>
    <property type="match status" value="1"/>
</dbReference>
<dbReference type="SUPFAM" id="SSF54534">
    <property type="entry name" value="FKBP-like"/>
    <property type="match status" value="1"/>
</dbReference>
<dbReference type="SUPFAM" id="SSF109998">
    <property type="entry name" value="Triger factor/SurA peptide-binding domain-like"/>
    <property type="match status" value="1"/>
</dbReference>
<dbReference type="SUPFAM" id="SSF102735">
    <property type="entry name" value="Trigger factor ribosome-binding domain"/>
    <property type="match status" value="1"/>
</dbReference>
<dbReference type="PROSITE" id="PS50059">
    <property type="entry name" value="FKBP_PPIASE"/>
    <property type="match status" value="1"/>
</dbReference>
<sequence>MQVSVETTQGLGRRVTITIAADSIETAVKSELVNVAKKVRIDGFRKGKVPMNIVAQRYGASVRQDVLGDLMSRNFIDAIIKEKINPAGAPTYVPGEYKLGEDFTYSVEFEVYPEVELQGLEAIEVEKPIVEVTDADVDGMLDTLRKQQATWKDKDGAVEAEDRVTIDFTGSVDGEEFEGGKASDFVLAMGQGRMIPGFEDGIKGHKAGEEFTIDVTFPEEYHAENLKGKAAKFAINLKKVEERELPELTAEFIKRFGVEDGSVEGLRAEVRKNMERELKSAIRNRVKSQAIEGLVKANDIDVPAALIDSEIDVLRRQAAQRFGGNEKQALELPRELFEEQAKRRVVVGLLLGEVIRTNELKADEERVKGLIEEMASAYEDPKEVIEFYSKNKELMDNMRNVALEEQAVEAVLAKAKVTEKETTFNELMNQQA</sequence>
<name>TIG_ECO24</name>
<accession>A7ZIJ4</accession>
<proteinExistence type="inferred from homology"/>
<protein>
    <recommendedName>
        <fullName evidence="1">Trigger factor</fullName>
        <shortName evidence="1">TF</shortName>
        <ecNumber evidence="1">5.2.1.8</ecNumber>
    </recommendedName>
    <alternativeName>
        <fullName evidence="1">PPIase</fullName>
    </alternativeName>
</protein>
<organism>
    <name type="scientific">Escherichia coli O139:H28 (strain E24377A / ETEC)</name>
    <dbReference type="NCBI Taxonomy" id="331111"/>
    <lineage>
        <taxon>Bacteria</taxon>
        <taxon>Pseudomonadati</taxon>
        <taxon>Pseudomonadota</taxon>
        <taxon>Gammaproteobacteria</taxon>
        <taxon>Enterobacterales</taxon>
        <taxon>Enterobacteriaceae</taxon>
        <taxon>Escherichia</taxon>
    </lineage>
</organism>
<gene>
    <name evidence="1" type="primary">tig</name>
    <name type="ordered locus">EcE24377A_0472</name>
</gene>
<feature type="chain" id="PRO_1000059325" description="Trigger factor">
    <location>
        <begin position="1"/>
        <end position="432"/>
    </location>
</feature>
<feature type="domain" description="PPIase FKBP-type" evidence="1">
    <location>
        <begin position="161"/>
        <end position="246"/>
    </location>
</feature>
<comment type="function">
    <text evidence="1">Involved in protein export. Acts as a chaperone by maintaining the newly synthesized protein in an open conformation. Functions as a peptidyl-prolyl cis-trans isomerase.</text>
</comment>
<comment type="catalytic activity">
    <reaction evidence="1">
        <text>[protein]-peptidylproline (omega=180) = [protein]-peptidylproline (omega=0)</text>
        <dbReference type="Rhea" id="RHEA:16237"/>
        <dbReference type="Rhea" id="RHEA-COMP:10747"/>
        <dbReference type="Rhea" id="RHEA-COMP:10748"/>
        <dbReference type="ChEBI" id="CHEBI:83833"/>
        <dbReference type="ChEBI" id="CHEBI:83834"/>
        <dbReference type="EC" id="5.2.1.8"/>
    </reaction>
</comment>
<comment type="subunit">
    <text evidence="1">Homodimer and monomer. In vivo most of the ribosomes are in complex with monomeric TF. Uncomplexed TF, however, is in a monomer-dimer equilibrium with approximately two thirds of TF existing in a dimeric state.</text>
</comment>
<comment type="subcellular location">
    <subcellularLocation>
        <location>Cytoplasm</location>
    </subcellularLocation>
    <text evidence="1">About half TF is bound to the ribosome near the polypeptide exit tunnel while the other half is free in the cytoplasm.</text>
</comment>
<comment type="domain">
    <text evidence="1">Consists of 3 domains; the N-terminus binds the ribosome, the middle domain has PPIase activity, while the C-terminus has intrinsic chaperone activity on its own.</text>
</comment>
<comment type="similarity">
    <text evidence="1">Belongs to the FKBP-type PPIase family. Tig subfamily.</text>
</comment>
<keyword id="KW-0131">Cell cycle</keyword>
<keyword id="KW-0132">Cell division</keyword>
<keyword id="KW-0143">Chaperone</keyword>
<keyword id="KW-0963">Cytoplasm</keyword>
<keyword id="KW-0413">Isomerase</keyword>
<keyword id="KW-1185">Reference proteome</keyword>
<keyword id="KW-0697">Rotamase</keyword>
<reference key="1">
    <citation type="journal article" date="2008" name="J. Bacteriol.">
        <title>The pangenome structure of Escherichia coli: comparative genomic analysis of E. coli commensal and pathogenic isolates.</title>
        <authorList>
            <person name="Rasko D.A."/>
            <person name="Rosovitz M.J."/>
            <person name="Myers G.S.A."/>
            <person name="Mongodin E.F."/>
            <person name="Fricke W.F."/>
            <person name="Gajer P."/>
            <person name="Crabtree J."/>
            <person name="Sebaihia M."/>
            <person name="Thomson N.R."/>
            <person name="Chaudhuri R."/>
            <person name="Henderson I.R."/>
            <person name="Sperandio V."/>
            <person name="Ravel J."/>
        </authorList>
    </citation>
    <scope>NUCLEOTIDE SEQUENCE [LARGE SCALE GENOMIC DNA]</scope>
    <source>
        <strain>E24377A / ETEC</strain>
    </source>
</reference>